<accession>Q7VDC0</accession>
<dbReference type="EC" id="7.1.1.6" evidence="1"/>
<dbReference type="EMBL" id="AE017126">
    <property type="protein sequence ID" value="AAP99506.1"/>
    <property type="molecule type" value="Genomic_DNA"/>
</dbReference>
<dbReference type="RefSeq" id="NP_874854.1">
    <property type="nucleotide sequence ID" value="NC_005042.1"/>
</dbReference>
<dbReference type="RefSeq" id="WP_011124615.1">
    <property type="nucleotide sequence ID" value="NC_005042.1"/>
</dbReference>
<dbReference type="SMR" id="Q7VDC0"/>
<dbReference type="STRING" id="167539.Pro_0460"/>
<dbReference type="EnsemblBacteria" id="AAP99506">
    <property type="protein sequence ID" value="AAP99506"/>
    <property type="gene ID" value="Pro_0460"/>
</dbReference>
<dbReference type="KEGG" id="pma:Pro_0460"/>
<dbReference type="PATRIC" id="fig|167539.5.peg.471"/>
<dbReference type="eggNOG" id="COG0723">
    <property type="taxonomic scope" value="Bacteria"/>
</dbReference>
<dbReference type="HOGENOM" id="CLU_055690_8_0_3"/>
<dbReference type="OrthoDB" id="9767869at2"/>
<dbReference type="Proteomes" id="UP000001420">
    <property type="component" value="Chromosome"/>
</dbReference>
<dbReference type="GO" id="GO:0031676">
    <property type="term" value="C:plasma membrane-derived thylakoid membrane"/>
    <property type="evidence" value="ECO:0007669"/>
    <property type="project" value="UniProtKB-SubCell"/>
</dbReference>
<dbReference type="GO" id="GO:0051537">
    <property type="term" value="F:2 iron, 2 sulfur cluster binding"/>
    <property type="evidence" value="ECO:0007669"/>
    <property type="project" value="UniProtKB-KW"/>
</dbReference>
<dbReference type="GO" id="GO:0045158">
    <property type="term" value="F:electron transporter, transferring electrons within cytochrome b6/f complex of photosystem II activity"/>
    <property type="evidence" value="ECO:0007669"/>
    <property type="project" value="UniProtKB-UniRule"/>
</dbReference>
<dbReference type="GO" id="GO:0046872">
    <property type="term" value="F:metal ion binding"/>
    <property type="evidence" value="ECO:0007669"/>
    <property type="project" value="UniProtKB-KW"/>
</dbReference>
<dbReference type="GO" id="GO:0004497">
    <property type="term" value="F:monooxygenase activity"/>
    <property type="evidence" value="ECO:0007669"/>
    <property type="project" value="UniProtKB-ARBA"/>
</dbReference>
<dbReference type="GO" id="GO:0016705">
    <property type="term" value="F:oxidoreductase activity, acting on paired donors, with incorporation or reduction of molecular oxygen"/>
    <property type="evidence" value="ECO:0007669"/>
    <property type="project" value="UniProtKB-ARBA"/>
</dbReference>
<dbReference type="GO" id="GO:0009496">
    <property type="term" value="F:plastoquinol--plastocyanin reductase activity"/>
    <property type="evidence" value="ECO:0007669"/>
    <property type="project" value="UniProtKB-UniRule"/>
</dbReference>
<dbReference type="GO" id="GO:0015979">
    <property type="term" value="P:photosynthesis"/>
    <property type="evidence" value="ECO:0007669"/>
    <property type="project" value="UniProtKB-UniRule"/>
</dbReference>
<dbReference type="CDD" id="cd03471">
    <property type="entry name" value="Rieske_cytochrome_b6f"/>
    <property type="match status" value="1"/>
</dbReference>
<dbReference type="FunFam" id="2.102.10.10:FF:000007">
    <property type="entry name" value="Cytochrome b6-f complex iron-sulfur subunit"/>
    <property type="match status" value="1"/>
</dbReference>
<dbReference type="Gene3D" id="2.102.10.10">
    <property type="entry name" value="Rieske [2Fe-2S] iron-sulphur domain"/>
    <property type="match status" value="1"/>
</dbReference>
<dbReference type="Gene3D" id="1.20.5.700">
    <property type="entry name" value="Single helix bin"/>
    <property type="match status" value="1"/>
</dbReference>
<dbReference type="HAMAP" id="MF_01335">
    <property type="entry name" value="Cytb6_f_Rieske"/>
    <property type="match status" value="1"/>
</dbReference>
<dbReference type="InterPro" id="IPR023960">
    <property type="entry name" value="Cyt_b6_f_Rieske"/>
</dbReference>
<dbReference type="InterPro" id="IPR017941">
    <property type="entry name" value="Rieske_2Fe-2S"/>
</dbReference>
<dbReference type="InterPro" id="IPR036922">
    <property type="entry name" value="Rieske_2Fe-2S_sf"/>
</dbReference>
<dbReference type="InterPro" id="IPR014349">
    <property type="entry name" value="Rieske_Fe-S_prot"/>
</dbReference>
<dbReference type="InterPro" id="IPR005805">
    <property type="entry name" value="Rieske_Fe-S_prot_C"/>
</dbReference>
<dbReference type="InterPro" id="IPR006311">
    <property type="entry name" value="TAT_signal"/>
</dbReference>
<dbReference type="NCBIfam" id="NF045928">
    <property type="entry name" value="Cytb6fFeSPetC"/>
    <property type="match status" value="1"/>
</dbReference>
<dbReference type="NCBIfam" id="NF010001">
    <property type="entry name" value="PRK13474.1"/>
    <property type="match status" value="1"/>
</dbReference>
<dbReference type="PANTHER" id="PTHR10134">
    <property type="entry name" value="CYTOCHROME B-C1 COMPLEX SUBUNIT RIESKE, MITOCHONDRIAL"/>
    <property type="match status" value="1"/>
</dbReference>
<dbReference type="Pfam" id="PF00355">
    <property type="entry name" value="Rieske"/>
    <property type="match status" value="1"/>
</dbReference>
<dbReference type="Pfam" id="PF25471">
    <property type="entry name" value="TM_PetC"/>
    <property type="match status" value="1"/>
</dbReference>
<dbReference type="PRINTS" id="PR00162">
    <property type="entry name" value="RIESKE"/>
</dbReference>
<dbReference type="SUPFAM" id="SSF50022">
    <property type="entry name" value="ISP domain"/>
    <property type="match status" value="1"/>
</dbReference>
<dbReference type="PROSITE" id="PS51296">
    <property type="entry name" value="RIESKE"/>
    <property type="match status" value="1"/>
</dbReference>
<dbReference type="PROSITE" id="PS51318">
    <property type="entry name" value="TAT"/>
    <property type="match status" value="1"/>
</dbReference>
<name>UCRI_PROMA</name>
<sequence length="178" mass="18784">MTQMSPSDVPSMGRRQFMNLLTFGTATGVALGALYPVANFFMPLRAGGGTGGTTAKDELGNAVTATGWLSNHPAGDRSLVQGLKGDPTYLIVDGDAAIGNFGINAICTHLGCVVPWNSGANKYICPCHGSQYDANGKVVRGPAPLSLALTHIDIDDDNVLVSQWTETDFRTGDKPWWA</sequence>
<evidence type="ECO:0000255" key="1">
    <source>
        <dbReference type="HAMAP-Rule" id="MF_01335"/>
    </source>
</evidence>
<comment type="function">
    <text evidence="1">Component of the cytochrome b6-f complex, which mediates electron transfer between photosystem II (PSII) and photosystem I (PSI), cyclic electron flow around PSI, and state transitions.</text>
</comment>
<comment type="catalytic activity">
    <reaction evidence="1">
        <text>2 oxidized [plastocyanin] + a plastoquinol + 2 H(+)(in) = 2 reduced [plastocyanin] + a plastoquinone + 4 H(+)(out)</text>
        <dbReference type="Rhea" id="RHEA:22148"/>
        <dbReference type="Rhea" id="RHEA-COMP:9561"/>
        <dbReference type="Rhea" id="RHEA-COMP:9562"/>
        <dbReference type="Rhea" id="RHEA-COMP:10039"/>
        <dbReference type="Rhea" id="RHEA-COMP:10040"/>
        <dbReference type="ChEBI" id="CHEBI:15378"/>
        <dbReference type="ChEBI" id="CHEBI:17757"/>
        <dbReference type="ChEBI" id="CHEBI:29036"/>
        <dbReference type="ChEBI" id="CHEBI:49552"/>
        <dbReference type="ChEBI" id="CHEBI:62192"/>
        <dbReference type="EC" id="7.1.1.6"/>
    </reaction>
</comment>
<comment type="cofactor">
    <cofactor evidence="1">
        <name>[2Fe-2S] cluster</name>
        <dbReference type="ChEBI" id="CHEBI:190135"/>
    </cofactor>
    <text evidence="1">Binds 1 [2Fe-2S] cluster per subunit.</text>
</comment>
<comment type="subunit">
    <text evidence="1">The 4 large subunits of the cytochrome b6-f complex are cytochrome b6, subunit IV (17 kDa polypeptide, PetD), cytochrome f and the Rieske protein, while the 4 small subunits are PetG, PetL, PetM and PetN. The complex functions as a dimer.</text>
</comment>
<comment type="subcellular location">
    <subcellularLocation>
        <location evidence="1">Cellular thylakoid membrane</location>
        <topology evidence="1">Single-pass membrane protein</topology>
    </subcellularLocation>
    <text evidence="1">The transmembrane helix obliquely spans the membrane in one monomer, and its extrinsic C-terminal domain is part of the other monomer.</text>
</comment>
<comment type="miscellaneous">
    <text>The Rieske iron-sulfur protein is a high potential 2Fe-2S protein.</text>
</comment>
<comment type="similarity">
    <text evidence="1">Belongs to the Rieske iron-sulfur protein family.</text>
</comment>
<proteinExistence type="inferred from homology"/>
<gene>
    <name evidence="1" type="primary">petC</name>
    <name type="ordered locus">Pro_0460</name>
</gene>
<feature type="chain" id="PRO_0000127777" description="Cytochrome b6-f complex iron-sulfur subunit">
    <location>
        <begin position="1"/>
        <end position="178"/>
    </location>
</feature>
<feature type="transmembrane region" description="Helical" evidence="1">
    <location>
        <begin position="20"/>
        <end position="42"/>
    </location>
</feature>
<feature type="domain" description="Rieske" evidence="1">
    <location>
        <begin position="71"/>
        <end position="161"/>
    </location>
</feature>
<feature type="binding site" evidence="1">
    <location>
        <position position="107"/>
    </location>
    <ligand>
        <name>[2Fe-2S] cluster</name>
        <dbReference type="ChEBI" id="CHEBI:190135"/>
    </ligand>
</feature>
<feature type="binding site" evidence="1">
    <location>
        <position position="109"/>
    </location>
    <ligand>
        <name>[2Fe-2S] cluster</name>
        <dbReference type="ChEBI" id="CHEBI:190135"/>
    </ligand>
</feature>
<feature type="binding site" evidence="1">
    <location>
        <position position="125"/>
    </location>
    <ligand>
        <name>[2Fe-2S] cluster</name>
        <dbReference type="ChEBI" id="CHEBI:190135"/>
    </ligand>
</feature>
<feature type="binding site" evidence="1">
    <location>
        <position position="128"/>
    </location>
    <ligand>
        <name>[2Fe-2S] cluster</name>
        <dbReference type="ChEBI" id="CHEBI:190135"/>
    </ligand>
</feature>
<feature type="disulfide bond" evidence="1">
    <location>
        <begin position="112"/>
        <end position="127"/>
    </location>
</feature>
<organism>
    <name type="scientific">Prochlorococcus marinus (strain SARG / CCMP1375 / SS120)</name>
    <dbReference type="NCBI Taxonomy" id="167539"/>
    <lineage>
        <taxon>Bacteria</taxon>
        <taxon>Bacillati</taxon>
        <taxon>Cyanobacteriota</taxon>
        <taxon>Cyanophyceae</taxon>
        <taxon>Synechococcales</taxon>
        <taxon>Prochlorococcaceae</taxon>
        <taxon>Prochlorococcus</taxon>
    </lineage>
</organism>
<protein>
    <recommendedName>
        <fullName evidence="1">Cytochrome b6-f complex iron-sulfur subunit</fullName>
        <ecNumber evidence="1">7.1.1.6</ecNumber>
    </recommendedName>
    <alternativeName>
        <fullName evidence="1">Plastohydroquinone:plastocyanin oxidoreductase iron-sulfur protein</fullName>
        <shortName evidence="1">ISP</shortName>
        <shortName evidence="1">RISP</shortName>
    </alternativeName>
    <alternativeName>
        <fullName evidence="1">Rieske iron-sulfur protein</fullName>
    </alternativeName>
</protein>
<reference key="1">
    <citation type="journal article" date="2003" name="Proc. Natl. Acad. Sci. U.S.A.">
        <title>Genome sequence of the cyanobacterium Prochlorococcus marinus SS120, a nearly minimal oxyphototrophic genome.</title>
        <authorList>
            <person name="Dufresne A."/>
            <person name="Salanoubat M."/>
            <person name="Partensky F."/>
            <person name="Artiguenave F."/>
            <person name="Axmann I.M."/>
            <person name="Barbe V."/>
            <person name="Duprat S."/>
            <person name="Galperin M.Y."/>
            <person name="Koonin E.V."/>
            <person name="Le Gall F."/>
            <person name="Makarova K.S."/>
            <person name="Ostrowski M."/>
            <person name="Oztas S."/>
            <person name="Robert C."/>
            <person name="Rogozin I.B."/>
            <person name="Scanlan D.J."/>
            <person name="Tandeau de Marsac N."/>
            <person name="Weissenbach J."/>
            <person name="Wincker P."/>
            <person name="Wolf Y.I."/>
            <person name="Hess W.R."/>
        </authorList>
    </citation>
    <scope>NUCLEOTIDE SEQUENCE [LARGE SCALE GENOMIC DNA]</scope>
    <source>
        <strain>SARG / CCMP1375 / SS120</strain>
    </source>
</reference>
<keyword id="KW-0001">2Fe-2S</keyword>
<keyword id="KW-1015">Disulfide bond</keyword>
<keyword id="KW-0249">Electron transport</keyword>
<keyword id="KW-0408">Iron</keyword>
<keyword id="KW-0411">Iron-sulfur</keyword>
<keyword id="KW-0472">Membrane</keyword>
<keyword id="KW-0479">Metal-binding</keyword>
<keyword id="KW-1185">Reference proteome</keyword>
<keyword id="KW-0793">Thylakoid</keyword>
<keyword id="KW-1278">Translocase</keyword>
<keyword id="KW-0812">Transmembrane</keyword>
<keyword id="KW-1133">Transmembrane helix</keyword>
<keyword id="KW-0813">Transport</keyword>